<reference key="1">
    <citation type="submission" date="2006-03" db="EMBL/GenBank/DDBJ databases">
        <title>Complete sequence of chromosome of Nitrobacter hamburgensis X14.</title>
        <authorList>
            <consortium name="US DOE Joint Genome Institute"/>
            <person name="Copeland A."/>
            <person name="Lucas S."/>
            <person name="Lapidus A."/>
            <person name="Barry K."/>
            <person name="Detter J.C."/>
            <person name="Glavina del Rio T."/>
            <person name="Hammon N."/>
            <person name="Israni S."/>
            <person name="Dalin E."/>
            <person name="Tice H."/>
            <person name="Pitluck S."/>
            <person name="Chain P."/>
            <person name="Malfatti S."/>
            <person name="Shin M."/>
            <person name="Vergez L."/>
            <person name="Schmutz J."/>
            <person name="Larimer F."/>
            <person name="Land M."/>
            <person name="Hauser L."/>
            <person name="Kyrpides N."/>
            <person name="Ivanova N."/>
            <person name="Ward B."/>
            <person name="Arp D."/>
            <person name="Klotz M."/>
            <person name="Stein L."/>
            <person name="O'Mullan G."/>
            <person name="Starkenburg S."/>
            <person name="Sayavedra L."/>
            <person name="Poret-Peterson A.T."/>
            <person name="Gentry M.E."/>
            <person name="Bruce D."/>
            <person name="Richardson P."/>
        </authorList>
    </citation>
    <scope>NUCLEOTIDE SEQUENCE [LARGE SCALE GENOMIC DNA]</scope>
    <source>
        <strain>DSM 10229 / NCIMB 13809 / X14</strain>
    </source>
</reference>
<evidence type="ECO:0000255" key="1">
    <source>
        <dbReference type="HAMAP-Rule" id="MF_00126"/>
    </source>
</evidence>
<name>SYQ_NITHX</name>
<dbReference type="EC" id="6.1.1.18" evidence="1"/>
<dbReference type="EMBL" id="CP000319">
    <property type="protein sequence ID" value="ABE62526.1"/>
    <property type="molecule type" value="Genomic_DNA"/>
</dbReference>
<dbReference type="RefSeq" id="WP_011510208.1">
    <property type="nucleotide sequence ID" value="NC_007964.1"/>
</dbReference>
<dbReference type="SMR" id="Q1QMM1"/>
<dbReference type="STRING" id="323097.Nham_1710"/>
<dbReference type="KEGG" id="nha:Nham_1710"/>
<dbReference type="eggNOG" id="COG0008">
    <property type="taxonomic scope" value="Bacteria"/>
</dbReference>
<dbReference type="HOGENOM" id="CLU_001882_2_3_5"/>
<dbReference type="OrthoDB" id="9807503at2"/>
<dbReference type="Proteomes" id="UP000001953">
    <property type="component" value="Chromosome"/>
</dbReference>
<dbReference type="GO" id="GO:0005829">
    <property type="term" value="C:cytosol"/>
    <property type="evidence" value="ECO:0007669"/>
    <property type="project" value="TreeGrafter"/>
</dbReference>
<dbReference type="GO" id="GO:0005524">
    <property type="term" value="F:ATP binding"/>
    <property type="evidence" value="ECO:0007669"/>
    <property type="project" value="UniProtKB-UniRule"/>
</dbReference>
<dbReference type="GO" id="GO:0004819">
    <property type="term" value="F:glutamine-tRNA ligase activity"/>
    <property type="evidence" value="ECO:0007669"/>
    <property type="project" value="UniProtKB-UniRule"/>
</dbReference>
<dbReference type="GO" id="GO:0006425">
    <property type="term" value="P:glutaminyl-tRNA aminoacylation"/>
    <property type="evidence" value="ECO:0007669"/>
    <property type="project" value="InterPro"/>
</dbReference>
<dbReference type="GO" id="GO:0006424">
    <property type="term" value="P:glutamyl-tRNA aminoacylation"/>
    <property type="evidence" value="ECO:0007669"/>
    <property type="project" value="UniProtKB-UniRule"/>
</dbReference>
<dbReference type="CDD" id="cd00807">
    <property type="entry name" value="GlnRS_core"/>
    <property type="match status" value="1"/>
</dbReference>
<dbReference type="FunFam" id="1.10.1160.10:FF:000001">
    <property type="entry name" value="Glutamine--tRNA ligase"/>
    <property type="match status" value="1"/>
</dbReference>
<dbReference type="FunFam" id="2.40.240.10:FF:000001">
    <property type="entry name" value="Glutamine--tRNA ligase"/>
    <property type="match status" value="1"/>
</dbReference>
<dbReference type="FunFam" id="3.90.800.10:FF:000001">
    <property type="entry name" value="Glutamine--tRNA ligase"/>
    <property type="match status" value="1"/>
</dbReference>
<dbReference type="FunFam" id="3.40.50.620:FF:000037">
    <property type="entry name" value="Glutamine--tRNA ligase cytoplasmic"/>
    <property type="match status" value="1"/>
</dbReference>
<dbReference type="Gene3D" id="1.10.1160.10">
    <property type="entry name" value="Glutamyl-trna Synthetase, Domain 2"/>
    <property type="match status" value="1"/>
</dbReference>
<dbReference type="Gene3D" id="3.90.800.10">
    <property type="entry name" value="Glutamyl-tRNA Synthetase, Domain 3"/>
    <property type="match status" value="1"/>
</dbReference>
<dbReference type="Gene3D" id="3.40.50.620">
    <property type="entry name" value="HUPs"/>
    <property type="match status" value="1"/>
</dbReference>
<dbReference type="Gene3D" id="2.40.240.10">
    <property type="entry name" value="Ribosomal Protein L25, Chain P"/>
    <property type="match status" value="2"/>
</dbReference>
<dbReference type="HAMAP" id="MF_00126">
    <property type="entry name" value="Gln_tRNA_synth"/>
    <property type="match status" value="1"/>
</dbReference>
<dbReference type="InterPro" id="IPR001412">
    <property type="entry name" value="aa-tRNA-synth_I_CS"/>
</dbReference>
<dbReference type="InterPro" id="IPR004514">
    <property type="entry name" value="Gln-tRNA-synth"/>
</dbReference>
<dbReference type="InterPro" id="IPR050132">
    <property type="entry name" value="Gln/Glu-tRNA_Ligase"/>
</dbReference>
<dbReference type="InterPro" id="IPR022861">
    <property type="entry name" value="Gln_tRNA_ligase_bac"/>
</dbReference>
<dbReference type="InterPro" id="IPR000924">
    <property type="entry name" value="Glu/Gln-tRNA-synth"/>
</dbReference>
<dbReference type="InterPro" id="IPR020058">
    <property type="entry name" value="Glu/Gln-tRNA-synth_Ib_cat-dom"/>
</dbReference>
<dbReference type="InterPro" id="IPR020059">
    <property type="entry name" value="Glu/Gln-tRNA-synth_Ib_codon-bd"/>
</dbReference>
<dbReference type="InterPro" id="IPR020061">
    <property type="entry name" value="Glu_tRNA_lig_a-bdl"/>
</dbReference>
<dbReference type="InterPro" id="IPR020056">
    <property type="entry name" value="Rbsml_bL25/Gln-tRNA_synth_N"/>
</dbReference>
<dbReference type="InterPro" id="IPR011035">
    <property type="entry name" value="Ribosomal_bL25/Gln-tRNA_synth"/>
</dbReference>
<dbReference type="InterPro" id="IPR014729">
    <property type="entry name" value="Rossmann-like_a/b/a_fold"/>
</dbReference>
<dbReference type="InterPro" id="IPR049437">
    <property type="entry name" value="tRNA-synt_1c_C2"/>
</dbReference>
<dbReference type="NCBIfam" id="TIGR00440">
    <property type="entry name" value="glnS"/>
    <property type="match status" value="1"/>
</dbReference>
<dbReference type="NCBIfam" id="NF011291">
    <property type="entry name" value="PRK14703.1"/>
    <property type="match status" value="1"/>
</dbReference>
<dbReference type="PANTHER" id="PTHR43097:SF5">
    <property type="entry name" value="GLUTAMATE--TRNA LIGASE"/>
    <property type="match status" value="1"/>
</dbReference>
<dbReference type="PANTHER" id="PTHR43097">
    <property type="entry name" value="GLUTAMINE-TRNA LIGASE"/>
    <property type="match status" value="1"/>
</dbReference>
<dbReference type="Pfam" id="PF00749">
    <property type="entry name" value="tRNA-synt_1c"/>
    <property type="match status" value="1"/>
</dbReference>
<dbReference type="Pfam" id="PF03950">
    <property type="entry name" value="tRNA-synt_1c_C"/>
    <property type="match status" value="1"/>
</dbReference>
<dbReference type="Pfam" id="PF20974">
    <property type="entry name" value="tRNA-synt_1c_C2"/>
    <property type="match status" value="1"/>
</dbReference>
<dbReference type="PRINTS" id="PR00987">
    <property type="entry name" value="TRNASYNTHGLU"/>
</dbReference>
<dbReference type="SUPFAM" id="SSF52374">
    <property type="entry name" value="Nucleotidylyl transferase"/>
    <property type="match status" value="1"/>
</dbReference>
<dbReference type="SUPFAM" id="SSF50715">
    <property type="entry name" value="Ribosomal protein L25-like"/>
    <property type="match status" value="1"/>
</dbReference>
<dbReference type="PROSITE" id="PS00178">
    <property type="entry name" value="AA_TRNA_LIGASE_I"/>
    <property type="match status" value="1"/>
</dbReference>
<protein>
    <recommendedName>
        <fullName evidence="1">Glutamine--tRNA ligase</fullName>
        <ecNumber evidence="1">6.1.1.18</ecNumber>
    </recommendedName>
    <alternativeName>
        <fullName evidence="1">Glutaminyl-tRNA synthetase</fullName>
        <shortName evidence="1">GlnRS</shortName>
    </alternativeName>
</protein>
<feature type="chain" id="PRO_1000095494" description="Glutamine--tRNA ligase">
    <location>
        <begin position="1"/>
        <end position="558"/>
    </location>
</feature>
<feature type="short sequence motif" description="'HIGH' region" evidence="1">
    <location>
        <begin position="36"/>
        <end position="46"/>
    </location>
</feature>
<feature type="short sequence motif" description="'KMSKS' region" evidence="1">
    <location>
        <begin position="270"/>
        <end position="274"/>
    </location>
</feature>
<feature type="binding site" evidence="1">
    <location>
        <begin position="37"/>
        <end position="39"/>
    </location>
    <ligand>
        <name>ATP</name>
        <dbReference type="ChEBI" id="CHEBI:30616"/>
    </ligand>
</feature>
<feature type="binding site" evidence="1">
    <location>
        <begin position="43"/>
        <end position="49"/>
    </location>
    <ligand>
        <name>ATP</name>
        <dbReference type="ChEBI" id="CHEBI:30616"/>
    </ligand>
</feature>
<feature type="binding site" evidence="1">
    <location>
        <position position="69"/>
    </location>
    <ligand>
        <name>L-glutamine</name>
        <dbReference type="ChEBI" id="CHEBI:58359"/>
    </ligand>
</feature>
<feature type="binding site" evidence="1">
    <location>
        <position position="214"/>
    </location>
    <ligand>
        <name>L-glutamine</name>
        <dbReference type="ChEBI" id="CHEBI:58359"/>
    </ligand>
</feature>
<feature type="binding site" evidence="1">
    <location>
        <position position="233"/>
    </location>
    <ligand>
        <name>ATP</name>
        <dbReference type="ChEBI" id="CHEBI:30616"/>
    </ligand>
</feature>
<feature type="binding site" evidence="1">
    <location>
        <begin position="263"/>
        <end position="264"/>
    </location>
    <ligand>
        <name>ATP</name>
        <dbReference type="ChEBI" id="CHEBI:30616"/>
    </ligand>
</feature>
<feature type="binding site" evidence="1">
    <location>
        <begin position="271"/>
        <end position="273"/>
    </location>
    <ligand>
        <name>ATP</name>
        <dbReference type="ChEBI" id="CHEBI:30616"/>
    </ligand>
</feature>
<comment type="catalytic activity">
    <reaction evidence="1">
        <text>tRNA(Gln) + L-glutamine + ATP = L-glutaminyl-tRNA(Gln) + AMP + diphosphate</text>
        <dbReference type="Rhea" id="RHEA:20121"/>
        <dbReference type="Rhea" id="RHEA-COMP:9662"/>
        <dbReference type="Rhea" id="RHEA-COMP:9681"/>
        <dbReference type="ChEBI" id="CHEBI:30616"/>
        <dbReference type="ChEBI" id="CHEBI:33019"/>
        <dbReference type="ChEBI" id="CHEBI:58359"/>
        <dbReference type="ChEBI" id="CHEBI:78442"/>
        <dbReference type="ChEBI" id="CHEBI:78521"/>
        <dbReference type="ChEBI" id="CHEBI:456215"/>
        <dbReference type="EC" id="6.1.1.18"/>
    </reaction>
</comment>
<comment type="subunit">
    <text evidence="1">Monomer.</text>
</comment>
<comment type="subcellular location">
    <subcellularLocation>
        <location evidence="1">Cytoplasm</location>
    </subcellularLocation>
</comment>
<comment type="similarity">
    <text evidence="1">Belongs to the class-I aminoacyl-tRNA synthetase family.</text>
</comment>
<organism>
    <name type="scientific">Nitrobacter hamburgensis (strain DSM 10229 / NCIMB 13809 / X14)</name>
    <dbReference type="NCBI Taxonomy" id="323097"/>
    <lineage>
        <taxon>Bacteria</taxon>
        <taxon>Pseudomonadati</taxon>
        <taxon>Pseudomonadota</taxon>
        <taxon>Alphaproteobacteria</taxon>
        <taxon>Hyphomicrobiales</taxon>
        <taxon>Nitrobacteraceae</taxon>
        <taxon>Nitrobacter</taxon>
    </lineage>
</organism>
<keyword id="KW-0030">Aminoacyl-tRNA synthetase</keyword>
<keyword id="KW-0067">ATP-binding</keyword>
<keyword id="KW-0963">Cytoplasm</keyword>
<keyword id="KW-0436">Ligase</keyword>
<keyword id="KW-0547">Nucleotide-binding</keyword>
<keyword id="KW-0648">Protein biosynthesis</keyword>
<keyword id="KW-1185">Reference proteome</keyword>
<proteinExistence type="inferred from homology"/>
<accession>Q1QMM1</accession>
<gene>
    <name evidence="1" type="primary">glnS</name>
    <name type="ordered locus">Nham_1710</name>
</gene>
<sequence length="558" mass="63038">MTDESTADAGRDFIRDIVAADLASGKHKSVVTRFPPEPNGYLHLGHAKSICLNFGIAEEFGGCCHLRFDDTNPTKEEQEYIDAIQRDVRWLGFDWGKNLHYASDYFEQLYAWAQHLVRAGKAYVDDQSQEDIRLARGTLTEPGRDSPFRDRPVDENLDLFARMRAGEFPNGARVLRARIDMASGNINLRDPVLYRILHAPHPRTGTAWNIYPSYDFAHGQSDSIEHITHSICTLEFEDHRPLYDWFLDNLPVPSRPHQYEFARLNVTHTLLSKRILTELVRGGHVAGWDDPRMPTLAGLQRRGVPAEALREFIKRIGVAKANSTVDVGMLDFAIRETLNKSAPRRMAVLRPLKIVIENYPEGESEELEAVNHPDDPSRGTRRIRFGRELYIEQDDFMENPPKKFFRLSPGREVRLRYAYFVTCREVVKNAAGDVVELRCTYDPATKGGNAPDGRKVKATMHWVSAAEAVPAEIRLYGHLFATAQPDAANFASELNPQSLETLSGMVEPALARDDTDGAVQFERQGYFCRDRDSSPGRLVFNRTVGLRDTWAKVAAAGS</sequence>